<evidence type="ECO:0000250" key="1"/>
<evidence type="ECO:0000250" key="2">
    <source>
        <dbReference type="UniProtKB" id="O75461"/>
    </source>
</evidence>
<evidence type="ECO:0000255" key="3"/>
<evidence type="ECO:0000256" key="4">
    <source>
        <dbReference type="SAM" id="MobiDB-lite"/>
    </source>
</evidence>
<evidence type="ECO:0000269" key="5">
    <source>
    </source>
</evidence>
<evidence type="ECO:0000269" key="6">
    <source>
    </source>
</evidence>
<evidence type="ECO:0000303" key="7">
    <source>
    </source>
</evidence>
<evidence type="ECO:0000303" key="8">
    <source>
    </source>
</evidence>
<evidence type="ECO:0000305" key="9"/>
<evidence type="ECO:0000312" key="10">
    <source>
        <dbReference type="MGI" id="MGI:1354159"/>
    </source>
</evidence>
<sequence length="272" mass="30852">MSQQRTARRQPSLLVDPAQETVRRRCRDPINVENLLPSKIRINLEENVQYVSMRKALKVKRPRFDVSLVYLTRKFMDLVRSAPGGILDLNKVATKLGVRKRRVYDITNVLDGIELVEKKSKNHIRWIGSDLNNFGAAPQQKKLQAELSDLSAMEDALDELIKDCAQQLLELTDDKENERLAYVTYQDIHGIQAFHEQIVIAVKAPEETRLDVPAPREDSITVHIRSTKGPIDVYLCEVEQNHSNGKTNDGIGASPSKSSHPQCPEKEDEPPQ</sequence>
<proteinExistence type="evidence at transcript level"/>
<accession>O54917</accession>
<accession>Q8K456</accession>
<comment type="function">
    <text evidence="2 5 6">Inhibitor of E2F-dependent transcription (PubMed:9403682). Binds DNA cooperatively with DP proteins through the E2 recognition site, 5'-TTTC[CG]CGC-3' (PubMed:18667754, PubMed:9403682). Has a preference for the 5'-TTTCCCGC-3' E2F recognition site (PubMed:9403682). E2F6 lacks the transcriptional activation and pocket protein binding domains (PubMed:9403682). Appears to regulate a subset of E2F-dependent genes whose products are required for entry into the cell cycle but not for normal cell cycle progression (By similarity). Represses expression of some meiosis-specific genes, including SLC25A31/ANT4 (PubMed:18667754). May silence expression via the recruitment of a chromatin remodeling complex containing histone H3-K9 methyltransferase activity. Overexpression delays the exit of cells from the S-phase (By similarity).</text>
</comment>
<comment type="subunit">
    <text evidence="2">Forms heterodimers with DP family members TFDP1 or TFDP2. Component of the DRTF1/E2F transcription factor complex. Part of the E2F6.com-1 complex in G0 phase composed of E2F6, MGA, MAX, TFDP1, CBX3, BAT8, EUHMTASE1, RING1, RNF2, MBLR, L3MBTL2 and YAF2. Component of some MLL1/MLL complex, at least composed of the core components KMT2A/MLL1, ASH2L, HCFC1/HCF1, WDR5 and RBBP5, as well as the facultative components BACC1, CHD8, E2F6, HSP70, INO80C, KANSL1, LAS1L, MAX, MCRS1, MGA, KAT8/MOF, PELP1, PHF20, PRP31, RING2, RUVB1/TIP49A, RUVB2/TIP49B, SENP3, TAF1, TAF4, TAF6, TAF7, TAF9 and TEX10.</text>
</comment>
<comment type="subcellular location">
    <subcellularLocation>
        <location evidence="2">Nucleus</location>
    </subcellularLocation>
</comment>
<comment type="similarity">
    <text evidence="9">Belongs to the E2F/DP family.</text>
</comment>
<dbReference type="EMBL" id="AF032131">
    <property type="protein sequence ID" value="AAC53521.1"/>
    <property type="molecule type" value="mRNA"/>
</dbReference>
<dbReference type="EMBL" id="AF487711">
    <property type="protein sequence ID" value="AAM45941.1"/>
    <property type="molecule type" value="Genomic_DNA"/>
</dbReference>
<dbReference type="EMBL" id="AC157352">
    <property type="status" value="NOT_ANNOTATED_CDS"/>
    <property type="molecule type" value="Genomic_DNA"/>
</dbReference>
<dbReference type="CCDS" id="CCDS36409.1"/>
<dbReference type="RefSeq" id="NP_150373.2">
    <property type="nucleotide sequence ID" value="NM_033270.2"/>
</dbReference>
<dbReference type="SMR" id="O54917"/>
<dbReference type="BioGRID" id="206042">
    <property type="interactions" value="6"/>
</dbReference>
<dbReference type="DIP" id="DIP-59331N"/>
<dbReference type="FunCoup" id="O54917">
    <property type="interactions" value="1970"/>
</dbReference>
<dbReference type="IntAct" id="O54917">
    <property type="interactions" value="1"/>
</dbReference>
<dbReference type="STRING" id="10090.ENSMUSP00000020908"/>
<dbReference type="iPTMnet" id="O54917"/>
<dbReference type="PhosphoSitePlus" id="O54917"/>
<dbReference type="PaxDb" id="10090-ENSMUSP00000020908"/>
<dbReference type="PeptideAtlas" id="O54917"/>
<dbReference type="ProteomicsDB" id="277701"/>
<dbReference type="Antibodypedia" id="12671">
    <property type="antibodies" value="332 antibodies from 36 providers"/>
</dbReference>
<dbReference type="DNASU" id="50496"/>
<dbReference type="Ensembl" id="ENSMUST00000020908.9">
    <property type="protein sequence ID" value="ENSMUSP00000020908.8"/>
    <property type="gene ID" value="ENSMUSG00000057469.9"/>
</dbReference>
<dbReference type="GeneID" id="50496"/>
<dbReference type="KEGG" id="mmu:50496"/>
<dbReference type="UCSC" id="uc007nce.2">
    <property type="organism name" value="mouse"/>
</dbReference>
<dbReference type="AGR" id="MGI:1354159"/>
<dbReference type="CTD" id="1876"/>
<dbReference type="MGI" id="MGI:1354159">
    <property type="gene designation" value="E2f6"/>
</dbReference>
<dbReference type="VEuPathDB" id="HostDB:ENSMUSG00000057469"/>
<dbReference type="eggNOG" id="KOG2577">
    <property type="taxonomic scope" value="Eukaryota"/>
</dbReference>
<dbReference type="GeneTree" id="ENSGT00940000155734"/>
<dbReference type="HOGENOM" id="CLU_032091_4_0_1"/>
<dbReference type="InParanoid" id="O54917"/>
<dbReference type="OMA" id="XPSKIRI"/>
<dbReference type="OrthoDB" id="1743261at2759"/>
<dbReference type="PhylomeDB" id="O54917"/>
<dbReference type="TreeFam" id="TF105566"/>
<dbReference type="Reactome" id="R-MMU-8953750">
    <property type="pathway name" value="Transcriptional Regulation by E2F6"/>
</dbReference>
<dbReference type="BioGRID-ORCS" id="50496">
    <property type="hits" value="3 hits in 79 CRISPR screens"/>
</dbReference>
<dbReference type="ChiTaRS" id="E2f6">
    <property type="organism name" value="mouse"/>
</dbReference>
<dbReference type="PRO" id="PR:O54917"/>
<dbReference type="Proteomes" id="UP000000589">
    <property type="component" value="Chromosome 12"/>
</dbReference>
<dbReference type="RNAct" id="O54917">
    <property type="molecule type" value="protein"/>
</dbReference>
<dbReference type="Bgee" id="ENSMUSG00000057469">
    <property type="expression patterns" value="Expressed in vastus lateralis and 252 other cell types or tissues"/>
</dbReference>
<dbReference type="ExpressionAtlas" id="O54917">
    <property type="expression patterns" value="baseline and differential"/>
</dbReference>
<dbReference type="GO" id="GO:0005662">
    <property type="term" value="C:DNA replication factor A complex"/>
    <property type="evidence" value="ECO:0000305"/>
    <property type="project" value="MGI"/>
</dbReference>
<dbReference type="GO" id="GO:0071339">
    <property type="term" value="C:MLL1 complex"/>
    <property type="evidence" value="ECO:0000250"/>
    <property type="project" value="UniProtKB"/>
</dbReference>
<dbReference type="GO" id="GO:0005634">
    <property type="term" value="C:nucleus"/>
    <property type="evidence" value="ECO:0000266"/>
    <property type="project" value="MGI"/>
</dbReference>
<dbReference type="GO" id="GO:0090575">
    <property type="term" value="C:RNA polymerase II transcription regulator complex"/>
    <property type="evidence" value="ECO:0007669"/>
    <property type="project" value="Ensembl"/>
</dbReference>
<dbReference type="GO" id="GO:0003677">
    <property type="term" value="F:DNA binding"/>
    <property type="evidence" value="ECO:0000314"/>
    <property type="project" value="MGI"/>
</dbReference>
<dbReference type="GO" id="GO:0003700">
    <property type="term" value="F:DNA-binding transcription factor activity"/>
    <property type="evidence" value="ECO:0000314"/>
    <property type="project" value="MGI"/>
</dbReference>
<dbReference type="GO" id="GO:0001227">
    <property type="term" value="F:DNA-binding transcription repressor activity, RNA polymerase II-specific"/>
    <property type="evidence" value="ECO:0000314"/>
    <property type="project" value="UniProtKB"/>
</dbReference>
<dbReference type="GO" id="GO:0046983">
    <property type="term" value="F:protein dimerization activity"/>
    <property type="evidence" value="ECO:0007669"/>
    <property type="project" value="InterPro"/>
</dbReference>
<dbReference type="GO" id="GO:0000978">
    <property type="term" value="F:RNA polymerase II cis-regulatory region sequence-specific DNA binding"/>
    <property type="evidence" value="ECO:0007669"/>
    <property type="project" value="InterPro"/>
</dbReference>
<dbReference type="GO" id="GO:0043565">
    <property type="term" value="F:sequence-specific DNA binding"/>
    <property type="evidence" value="ECO:0000314"/>
    <property type="project" value="UniProtKB"/>
</dbReference>
<dbReference type="GO" id="GO:0006357">
    <property type="term" value="P:regulation of transcription by RNA polymerase II"/>
    <property type="evidence" value="ECO:0000316"/>
    <property type="project" value="MGI"/>
</dbReference>
<dbReference type="CDD" id="cd14660">
    <property type="entry name" value="E2F_DD"/>
    <property type="match status" value="1"/>
</dbReference>
<dbReference type="FunFam" id="1.10.10.10:FF:000008">
    <property type="entry name" value="E2F transcription factor 1"/>
    <property type="match status" value="1"/>
</dbReference>
<dbReference type="Gene3D" id="6.10.250.540">
    <property type="match status" value="1"/>
</dbReference>
<dbReference type="Gene3D" id="1.10.10.10">
    <property type="entry name" value="Winged helix-like DNA-binding domain superfamily/Winged helix DNA-binding domain"/>
    <property type="match status" value="1"/>
</dbReference>
<dbReference type="InterPro" id="IPR015633">
    <property type="entry name" value="E2F"/>
</dbReference>
<dbReference type="InterPro" id="IPR037241">
    <property type="entry name" value="E2F-DP_heterodim"/>
</dbReference>
<dbReference type="InterPro" id="IPR032198">
    <property type="entry name" value="E2F_CC-MB"/>
</dbReference>
<dbReference type="InterPro" id="IPR003316">
    <property type="entry name" value="E2F_WHTH_DNA-bd_dom"/>
</dbReference>
<dbReference type="InterPro" id="IPR036388">
    <property type="entry name" value="WH-like_DNA-bd_sf"/>
</dbReference>
<dbReference type="InterPro" id="IPR036390">
    <property type="entry name" value="WH_DNA-bd_sf"/>
</dbReference>
<dbReference type="PANTHER" id="PTHR12081">
    <property type="entry name" value="TRANSCRIPTION FACTOR E2F"/>
    <property type="match status" value="1"/>
</dbReference>
<dbReference type="PANTHER" id="PTHR12081:SF19">
    <property type="entry name" value="TRANSCRIPTION FACTOR E2F6"/>
    <property type="match status" value="1"/>
</dbReference>
<dbReference type="Pfam" id="PF16421">
    <property type="entry name" value="E2F_CC-MB"/>
    <property type="match status" value="1"/>
</dbReference>
<dbReference type="Pfam" id="PF02319">
    <property type="entry name" value="E2F_TDP"/>
    <property type="match status" value="1"/>
</dbReference>
<dbReference type="SMART" id="SM01372">
    <property type="entry name" value="E2F_TDP"/>
    <property type="match status" value="1"/>
</dbReference>
<dbReference type="SUPFAM" id="SSF144074">
    <property type="entry name" value="E2F-DP heterodimerization region"/>
    <property type="match status" value="1"/>
</dbReference>
<dbReference type="SUPFAM" id="SSF46785">
    <property type="entry name" value="Winged helix' DNA-binding domain"/>
    <property type="match status" value="1"/>
</dbReference>
<feature type="chain" id="PRO_0000219473" description="Transcription factor E2F6">
    <location>
        <begin position="1"/>
        <end position="272"/>
    </location>
</feature>
<feature type="DNA-binding region" evidence="3">
    <location>
        <begin position="50"/>
        <end position="129"/>
    </location>
</feature>
<feature type="region of interest" description="Binding to corepressors" evidence="9">
    <location>
        <begin position="1"/>
        <end position="62"/>
    </location>
</feature>
<feature type="region of interest" description="Dimerization" evidence="3">
    <location>
        <begin position="130"/>
        <end position="222"/>
    </location>
</feature>
<feature type="region of interest" description="Leucine-zipper">
    <location>
        <begin position="143"/>
        <end position="164"/>
    </location>
</feature>
<feature type="region of interest" description="Transcription repression" evidence="1">
    <location>
        <begin position="173"/>
        <end position="272"/>
    </location>
</feature>
<feature type="region of interest" description="Disordered" evidence="4">
    <location>
        <begin position="242"/>
        <end position="272"/>
    </location>
</feature>
<feature type="short sequence motif" description="DEF box">
    <location>
        <begin position="95"/>
        <end position="129"/>
    </location>
</feature>
<feature type="sequence conflict" description="In Ref. 1; AAC53521." evidence="9" ref="1">
    <original>G</original>
    <variation>S</variation>
    <location>
        <position position="97"/>
    </location>
</feature>
<organism>
    <name type="scientific">Mus musculus</name>
    <name type="common">Mouse</name>
    <dbReference type="NCBI Taxonomy" id="10090"/>
    <lineage>
        <taxon>Eukaryota</taxon>
        <taxon>Metazoa</taxon>
        <taxon>Chordata</taxon>
        <taxon>Craniata</taxon>
        <taxon>Vertebrata</taxon>
        <taxon>Euteleostomi</taxon>
        <taxon>Mammalia</taxon>
        <taxon>Eutheria</taxon>
        <taxon>Euarchontoglires</taxon>
        <taxon>Glires</taxon>
        <taxon>Rodentia</taxon>
        <taxon>Myomorpha</taxon>
        <taxon>Muroidea</taxon>
        <taxon>Muridae</taxon>
        <taxon>Murinae</taxon>
        <taxon>Mus</taxon>
        <taxon>Mus</taxon>
    </lineage>
</organism>
<keyword id="KW-0131">Cell cycle</keyword>
<keyword id="KW-0238">DNA-binding</keyword>
<keyword id="KW-0539">Nucleus</keyword>
<keyword id="KW-1185">Reference proteome</keyword>
<keyword id="KW-0678">Repressor</keyword>
<keyword id="KW-0804">Transcription</keyword>
<keyword id="KW-0805">Transcription regulation</keyword>
<protein>
    <recommendedName>
        <fullName evidence="9">Transcription factor E2F6</fullName>
        <shortName evidence="7">E2F-6</shortName>
    </recommendedName>
    <alternativeName>
        <fullName evidence="8">E2F-binding site-modulating activity protein</fullName>
        <shortName evidence="8">EMA</shortName>
    </alternativeName>
</protein>
<reference key="1">
    <citation type="journal article" date="1997" name="Nature">
        <title>An E2F-like repressor of transcription.</title>
        <authorList>
            <person name="Morkel M."/>
            <person name="Wenkel J."/>
            <person name="Bannister A.J."/>
            <person name="Kouzarides T."/>
            <person name="Hagemeier C."/>
        </authorList>
    </citation>
    <scope>NUCLEOTIDE SEQUENCE [MRNA]</scope>
    <scope>FUNCTION</scope>
    <source>
        <tissue>Liver</tissue>
    </source>
</reference>
<reference key="2">
    <citation type="submission" date="2002-02" db="EMBL/GenBank/DDBJ databases">
        <title>Characterization of the complete mouse E2F6 gene.</title>
        <authorList>
            <person name="Salih M."/>
            <person name="Tuana B.S."/>
        </authorList>
    </citation>
    <scope>NUCLEOTIDE SEQUENCE [GENOMIC DNA]</scope>
    <source>
        <strain>129/SvJ</strain>
        <tissue>Liver</tissue>
    </source>
</reference>
<reference key="3">
    <citation type="journal article" date="2009" name="PLoS Biol.">
        <title>Lineage-specific biology revealed by a finished genome assembly of the mouse.</title>
        <authorList>
            <person name="Church D.M."/>
            <person name="Goodstadt L."/>
            <person name="Hillier L.W."/>
            <person name="Zody M.C."/>
            <person name="Goldstein S."/>
            <person name="She X."/>
            <person name="Bult C.J."/>
            <person name="Agarwala R."/>
            <person name="Cherry J.L."/>
            <person name="DiCuccio M."/>
            <person name="Hlavina W."/>
            <person name="Kapustin Y."/>
            <person name="Meric P."/>
            <person name="Maglott D."/>
            <person name="Birtle Z."/>
            <person name="Marques A.C."/>
            <person name="Graves T."/>
            <person name="Zhou S."/>
            <person name="Teague B."/>
            <person name="Potamousis K."/>
            <person name="Churas C."/>
            <person name="Place M."/>
            <person name="Herschleb J."/>
            <person name="Runnheim R."/>
            <person name="Forrest D."/>
            <person name="Amos-Landgraf J."/>
            <person name="Schwartz D.C."/>
            <person name="Cheng Z."/>
            <person name="Lindblad-Toh K."/>
            <person name="Eichler E.E."/>
            <person name="Ponting C.P."/>
        </authorList>
    </citation>
    <scope>NUCLEOTIDE SEQUENCE [LARGE SCALE GENOMIC DNA]</scope>
    <source>
        <strain>C57BL/6J</strain>
    </source>
</reference>
<reference key="4">
    <citation type="journal article" date="2008" name="Biol. Reprod.">
        <title>A conserved E2F6-binding element in murine meiosis-specific gene promoters.</title>
        <authorList>
            <person name="Kehoe S.M."/>
            <person name="Oka M."/>
            <person name="Hankowski K.E."/>
            <person name="Reichert N."/>
            <person name="Garcia S."/>
            <person name="McCarrey J.R."/>
            <person name="Gaubatz S."/>
            <person name="Terada N."/>
        </authorList>
    </citation>
    <scope>FUNCTION</scope>
</reference>
<gene>
    <name evidence="7 10" type="primary">E2f6</name>
</gene>
<name>E2F6_MOUSE</name>